<dbReference type="EC" id="3.5.1.88" evidence="1"/>
<dbReference type="EMBL" id="CP000023">
    <property type="protein sequence ID" value="AAV59876.1"/>
    <property type="molecule type" value="Genomic_DNA"/>
</dbReference>
<dbReference type="RefSeq" id="WP_011225356.1">
    <property type="nucleotide sequence ID" value="NC_006448.1"/>
</dbReference>
<dbReference type="SMR" id="Q5M6B0"/>
<dbReference type="STRING" id="264199.stu0151"/>
<dbReference type="GeneID" id="66898095"/>
<dbReference type="KEGG" id="stl:stu0151"/>
<dbReference type="eggNOG" id="COG0242">
    <property type="taxonomic scope" value="Bacteria"/>
</dbReference>
<dbReference type="HOGENOM" id="CLU_061901_4_0_9"/>
<dbReference type="Proteomes" id="UP000001170">
    <property type="component" value="Chromosome"/>
</dbReference>
<dbReference type="GO" id="GO:0046872">
    <property type="term" value="F:metal ion binding"/>
    <property type="evidence" value="ECO:0007669"/>
    <property type="project" value="UniProtKB-KW"/>
</dbReference>
<dbReference type="GO" id="GO:0042586">
    <property type="term" value="F:peptide deformylase activity"/>
    <property type="evidence" value="ECO:0007669"/>
    <property type="project" value="UniProtKB-UniRule"/>
</dbReference>
<dbReference type="GO" id="GO:0043686">
    <property type="term" value="P:co-translational protein modification"/>
    <property type="evidence" value="ECO:0007669"/>
    <property type="project" value="TreeGrafter"/>
</dbReference>
<dbReference type="GO" id="GO:0006412">
    <property type="term" value="P:translation"/>
    <property type="evidence" value="ECO:0007669"/>
    <property type="project" value="UniProtKB-UniRule"/>
</dbReference>
<dbReference type="CDD" id="cd00487">
    <property type="entry name" value="Pep_deformylase"/>
    <property type="match status" value="1"/>
</dbReference>
<dbReference type="FunFam" id="3.90.45.10:FF:000002">
    <property type="entry name" value="Peptide deformylase"/>
    <property type="match status" value="1"/>
</dbReference>
<dbReference type="Gene3D" id="3.90.45.10">
    <property type="entry name" value="Peptide deformylase"/>
    <property type="match status" value="1"/>
</dbReference>
<dbReference type="HAMAP" id="MF_00163">
    <property type="entry name" value="Pep_deformylase"/>
    <property type="match status" value="1"/>
</dbReference>
<dbReference type="InterPro" id="IPR023635">
    <property type="entry name" value="Peptide_deformylase"/>
</dbReference>
<dbReference type="InterPro" id="IPR036821">
    <property type="entry name" value="Peptide_deformylase_sf"/>
</dbReference>
<dbReference type="NCBIfam" id="TIGR00079">
    <property type="entry name" value="pept_deformyl"/>
    <property type="match status" value="1"/>
</dbReference>
<dbReference type="PANTHER" id="PTHR10458">
    <property type="entry name" value="PEPTIDE DEFORMYLASE"/>
    <property type="match status" value="1"/>
</dbReference>
<dbReference type="PANTHER" id="PTHR10458:SF8">
    <property type="entry name" value="PEPTIDE DEFORMYLASE 2"/>
    <property type="match status" value="1"/>
</dbReference>
<dbReference type="Pfam" id="PF01327">
    <property type="entry name" value="Pep_deformylase"/>
    <property type="match status" value="1"/>
</dbReference>
<dbReference type="PIRSF" id="PIRSF004749">
    <property type="entry name" value="Pep_def"/>
    <property type="match status" value="1"/>
</dbReference>
<dbReference type="PRINTS" id="PR01576">
    <property type="entry name" value="PDEFORMYLASE"/>
</dbReference>
<dbReference type="SUPFAM" id="SSF56420">
    <property type="entry name" value="Peptide deformylase"/>
    <property type="match status" value="1"/>
</dbReference>
<name>DEF_STRT2</name>
<gene>
    <name evidence="1" type="primary">def</name>
    <name type="ordered locus">stu0151</name>
</gene>
<comment type="function">
    <text evidence="1">Removes the formyl group from the N-terminal Met of newly synthesized proteins. Requires at least a dipeptide for an efficient rate of reaction. N-terminal L-methionine is a prerequisite for activity but the enzyme has broad specificity at other positions.</text>
</comment>
<comment type="catalytic activity">
    <reaction evidence="1">
        <text>N-terminal N-formyl-L-methionyl-[peptide] + H2O = N-terminal L-methionyl-[peptide] + formate</text>
        <dbReference type="Rhea" id="RHEA:24420"/>
        <dbReference type="Rhea" id="RHEA-COMP:10639"/>
        <dbReference type="Rhea" id="RHEA-COMP:10640"/>
        <dbReference type="ChEBI" id="CHEBI:15377"/>
        <dbReference type="ChEBI" id="CHEBI:15740"/>
        <dbReference type="ChEBI" id="CHEBI:49298"/>
        <dbReference type="ChEBI" id="CHEBI:64731"/>
        <dbReference type="EC" id="3.5.1.88"/>
    </reaction>
</comment>
<comment type="cofactor">
    <cofactor evidence="1">
        <name>Fe(2+)</name>
        <dbReference type="ChEBI" id="CHEBI:29033"/>
    </cofactor>
    <text evidence="1">Binds 1 Fe(2+) ion.</text>
</comment>
<comment type="similarity">
    <text evidence="1">Belongs to the polypeptide deformylase family.</text>
</comment>
<evidence type="ECO:0000255" key="1">
    <source>
        <dbReference type="HAMAP-Rule" id="MF_00163"/>
    </source>
</evidence>
<sequence>MDAQTKIIRASHMIDMNDIIREGNPTLRAVAEDVTLPLSDEDIILGEKMMQFLRNSQDPVIAEKMGLRGGVGLAAPQLDISKRIIAVLVPNPEDAKGNPPKEAYSLQEIMYNPKVVAHSVQEAALGNGEGCLSVDRDVPGYVVRHARVTIEYFNKEGEKKRIKLRGYDSIVVQHEIDHTNGIMFYDRINKDNPFTIKDGLLIIE</sequence>
<protein>
    <recommendedName>
        <fullName evidence="1">Peptide deformylase</fullName>
        <shortName evidence="1">PDF</shortName>
        <ecNumber evidence="1">3.5.1.88</ecNumber>
    </recommendedName>
    <alternativeName>
        <fullName evidence="1">Polypeptide deformylase</fullName>
    </alternativeName>
</protein>
<accession>Q5M6B0</accession>
<feature type="chain" id="PRO_0000301111" description="Peptide deformylase">
    <location>
        <begin position="1"/>
        <end position="204"/>
    </location>
</feature>
<feature type="active site" evidence="1">
    <location>
        <position position="175"/>
    </location>
</feature>
<feature type="binding site" evidence="1">
    <location>
        <position position="131"/>
    </location>
    <ligand>
        <name>Fe cation</name>
        <dbReference type="ChEBI" id="CHEBI:24875"/>
    </ligand>
</feature>
<feature type="binding site" evidence="1">
    <location>
        <position position="174"/>
    </location>
    <ligand>
        <name>Fe cation</name>
        <dbReference type="ChEBI" id="CHEBI:24875"/>
    </ligand>
</feature>
<feature type="binding site" evidence="1">
    <location>
        <position position="178"/>
    </location>
    <ligand>
        <name>Fe cation</name>
        <dbReference type="ChEBI" id="CHEBI:24875"/>
    </ligand>
</feature>
<proteinExistence type="inferred from homology"/>
<organism>
    <name type="scientific">Streptococcus thermophilus (strain ATCC BAA-250 / LMG 18311)</name>
    <dbReference type="NCBI Taxonomy" id="264199"/>
    <lineage>
        <taxon>Bacteria</taxon>
        <taxon>Bacillati</taxon>
        <taxon>Bacillota</taxon>
        <taxon>Bacilli</taxon>
        <taxon>Lactobacillales</taxon>
        <taxon>Streptococcaceae</taxon>
        <taxon>Streptococcus</taxon>
    </lineage>
</organism>
<keyword id="KW-0378">Hydrolase</keyword>
<keyword id="KW-0408">Iron</keyword>
<keyword id="KW-0479">Metal-binding</keyword>
<keyword id="KW-0648">Protein biosynthesis</keyword>
<keyword id="KW-1185">Reference proteome</keyword>
<reference key="1">
    <citation type="journal article" date="2004" name="Nat. Biotechnol.">
        <title>Complete sequence and comparative genome analysis of the dairy bacterium Streptococcus thermophilus.</title>
        <authorList>
            <person name="Bolotin A."/>
            <person name="Quinquis B."/>
            <person name="Renault P."/>
            <person name="Sorokin A."/>
            <person name="Ehrlich S.D."/>
            <person name="Kulakauskas S."/>
            <person name="Lapidus A."/>
            <person name="Goltsman E."/>
            <person name="Mazur M."/>
            <person name="Pusch G.D."/>
            <person name="Fonstein M."/>
            <person name="Overbeek R."/>
            <person name="Kyprides N."/>
            <person name="Purnelle B."/>
            <person name="Prozzi D."/>
            <person name="Ngui K."/>
            <person name="Masuy D."/>
            <person name="Hancy F."/>
            <person name="Burteau S."/>
            <person name="Boutry M."/>
            <person name="Delcour J."/>
            <person name="Goffeau A."/>
            <person name="Hols P."/>
        </authorList>
    </citation>
    <scope>NUCLEOTIDE SEQUENCE [LARGE SCALE GENOMIC DNA]</scope>
    <source>
        <strain>ATCC BAA-250 / LMG 18311</strain>
    </source>
</reference>